<organism>
    <name type="scientific">Clostridium botulinum (strain Okra / Type B1)</name>
    <dbReference type="NCBI Taxonomy" id="498213"/>
    <lineage>
        <taxon>Bacteria</taxon>
        <taxon>Bacillati</taxon>
        <taxon>Bacillota</taxon>
        <taxon>Clostridia</taxon>
        <taxon>Eubacteriales</taxon>
        <taxon>Clostridiaceae</taxon>
        <taxon>Clostridium</taxon>
    </lineage>
</organism>
<comment type="function">
    <text evidence="1">Binds directly to 23S ribosomal RNA and is necessary for the in vitro assembly process of the 50S ribosomal subunit. It is not involved in the protein synthesizing functions of that subunit.</text>
</comment>
<comment type="similarity">
    <text evidence="1">Belongs to the bacterial ribosomal protein bL20 family.</text>
</comment>
<accession>B1IMV0</accession>
<feature type="chain" id="PRO_1000122296" description="Large ribosomal subunit protein bL20">
    <location>
        <begin position="1"/>
        <end position="119"/>
    </location>
</feature>
<proteinExistence type="inferred from homology"/>
<reference key="1">
    <citation type="journal article" date="2007" name="PLoS ONE">
        <title>Analysis of the neurotoxin complex genes in Clostridium botulinum A1-A4 and B1 strains: BoNT/A3, /Ba4 and /B1 clusters are located within plasmids.</title>
        <authorList>
            <person name="Smith T.J."/>
            <person name="Hill K.K."/>
            <person name="Foley B.T."/>
            <person name="Detter J.C."/>
            <person name="Munk A.C."/>
            <person name="Bruce D.C."/>
            <person name="Doggett N.A."/>
            <person name="Smith L.A."/>
            <person name="Marks J.D."/>
            <person name="Xie G."/>
            <person name="Brettin T.S."/>
        </authorList>
    </citation>
    <scope>NUCLEOTIDE SEQUENCE [LARGE SCALE GENOMIC DNA]</scope>
    <source>
        <strain>Okra / Type B1</strain>
    </source>
</reference>
<keyword id="KW-0687">Ribonucleoprotein</keyword>
<keyword id="KW-0689">Ribosomal protein</keyword>
<keyword id="KW-0694">RNA-binding</keyword>
<keyword id="KW-0699">rRNA-binding</keyword>
<protein>
    <recommendedName>
        <fullName evidence="1">Large ribosomal subunit protein bL20</fullName>
    </recommendedName>
    <alternativeName>
        <fullName evidence="2">50S ribosomal protein L20</fullName>
    </alternativeName>
</protein>
<name>RL20_CLOBK</name>
<sequence length="119" mass="13584">MARVKRAMNARKRHKKVLKLAKGYYGGKSKLFKTANESVIRALRNAYVGRKLKKRDYRKLWIARINAATRMNGLSYSKFMNGIKNAGIDINRKMLSEIAINDPKAFAELVDVAKKQLNA</sequence>
<gene>
    <name evidence="1" type="primary">rplT</name>
    <name type="ordered locus">CLD_1406</name>
</gene>
<dbReference type="EMBL" id="CP000939">
    <property type="protein sequence ID" value="ACA46622.1"/>
    <property type="molecule type" value="Genomic_DNA"/>
</dbReference>
<dbReference type="RefSeq" id="WP_003386545.1">
    <property type="nucleotide sequence ID" value="NC_010516.1"/>
</dbReference>
<dbReference type="SMR" id="B1IMV0"/>
<dbReference type="GeneID" id="92939856"/>
<dbReference type="KEGG" id="cbb:CLD_1406"/>
<dbReference type="HOGENOM" id="CLU_123265_0_1_9"/>
<dbReference type="Proteomes" id="UP000008541">
    <property type="component" value="Chromosome"/>
</dbReference>
<dbReference type="GO" id="GO:1990904">
    <property type="term" value="C:ribonucleoprotein complex"/>
    <property type="evidence" value="ECO:0007669"/>
    <property type="project" value="UniProtKB-KW"/>
</dbReference>
<dbReference type="GO" id="GO:0005840">
    <property type="term" value="C:ribosome"/>
    <property type="evidence" value="ECO:0007669"/>
    <property type="project" value="UniProtKB-KW"/>
</dbReference>
<dbReference type="GO" id="GO:0019843">
    <property type="term" value="F:rRNA binding"/>
    <property type="evidence" value="ECO:0007669"/>
    <property type="project" value="UniProtKB-UniRule"/>
</dbReference>
<dbReference type="GO" id="GO:0003735">
    <property type="term" value="F:structural constituent of ribosome"/>
    <property type="evidence" value="ECO:0007669"/>
    <property type="project" value="InterPro"/>
</dbReference>
<dbReference type="GO" id="GO:0000027">
    <property type="term" value="P:ribosomal large subunit assembly"/>
    <property type="evidence" value="ECO:0007669"/>
    <property type="project" value="UniProtKB-UniRule"/>
</dbReference>
<dbReference type="GO" id="GO:0006412">
    <property type="term" value="P:translation"/>
    <property type="evidence" value="ECO:0007669"/>
    <property type="project" value="InterPro"/>
</dbReference>
<dbReference type="CDD" id="cd07026">
    <property type="entry name" value="Ribosomal_L20"/>
    <property type="match status" value="1"/>
</dbReference>
<dbReference type="FunFam" id="1.10.1900.20:FF:000001">
    <property type="entry name" value="50S ribosomal protein L20"/>
    <property type="match status" value="1"/>
</dbReference>
<dbReference type="Gene3D" id="6.10.160.10">
    <property type="match status" value="1"/>
</dbReference>
<dbReference type="Gene3D" id="1.10.1900.20">
    <property type="entry name" value="Ribosomal protein L20"/>
    <property type="match status" value="1"/>
</dbReference>
<dbReference type="HAMAP" id="MF_00382">
    <property type="entry name" value="Ribosomal_bL20"/>
    <property type="match status" value="1"/>
</dbReference>
<dbReference type="InterPro" id="IPR005813">
    <property type="entry name" value="Ribosomal_bL20"/>
</dbReference>
<dbReference type="InterPro" id="IPR049946">
    <property type="entry name" value="RIBOSOMAL_L20_CS"/>
</dbReference>
<dbReference type="InterPro" id="IPR035566">
    <property type="entry name" value="Ribosomal_protein_bL20_C"/>
</dbReference>
<dbReference type="NCBIfam" id="TIGR01032">
    <property type="entry name" value="rplT_bact"/>
    <property type="match status" value="1"/>
</dbReference>
<dbReference type="PANTHER" id="PTHR10986">
    <property type="entry name" value="39S RIBOSOMAL PROTEIN L20"/>
    <property type="match status" value="1"/>
</dbReference>
<dbReference type="Pfam" id="PF00453">
    <property type="entry name" value="Ribosomal_L20"/>
    <property type="match status" value="1"/>
</dbReference>
<dbReference type="PRINTS" id="PR00062">
    <property type="entry name" value="RIBOSOMALL20"/>
</dbReference>
<dbReference type="SUPFAM" id="SSF74731">
    <property type="entry name" value="Ribosomal protein L20"/>
    <property type="match status" value="1"/>
</dbReference>
<dbReference type="PROSITE" id="PS00937">
    <property type="entry name" value="RIBOSOMAL_L20"/>
    <property type="match status" value="1"/>
</dbReference>
<evidence type="ECO:0000255" key="1">
    <source>
        <dbReference type="HAMAP-Rule" id="MF_00382"/>
    </source>
</evidence>
<evidence type="ECO:0000305" key="2"/>